<organism>
    <name type="scientific">Lactobacillus johnsonii (strain CNCM I-12250 / La1 / NCC 533)</name>
    <dbReference type="NCBI Taxonomy" id="257314"/>
    <lineage>
        <taxon>Bacteria</taxon>
        <taxon>Bacillati</taxon>
        <taxon>Bacillota</taxon>
        <taxon>Bacilli</taxon>
        <taxon>Lactobacillales</taxon>
        <taxon>Lactobacillaceae</taxon>
        <taxon>Lactobacillus</taxon>
    </lineage>
</organism>
<dbReference type="EC" id="3.1.11.6" evidence="1"/>
<dbReference type="EMBL" id="AE017198">
    <property type="protein sequence ID" value="AAS09317.1"/>
    <property type="molecule type" value="Genomic_DNA"/>
</dbReference>
<dbReference type="RefSeq" id="WP_011162268.1">
    <property type="nucleotide sequence ID" value="NC_005362.1"/>
</dbReference>
<dbReference type="SMR" id="Q74IM1"/>
<dbReference type="KEGG" id="ljo:LJ_1549"/>
<dbReference type="PATRIC" id="fig|257314.6.peg.1366"/>
<dbReference type="eggNOG" id="COG1570">
    <property type="taxonomic scope" value="Bacteria"/>
</dbReference>
<dbReference type="HOGENOM" id="CLU_023625_3_1_9"/>
<dbReference type="Proteomes" id="UP000000581">
    <property type="component" value="Chromosome"/>
</dbReference>
<dbReference type="GO" id="GO:0005737">
    <property type="term" value="C:cytoplasm"/>
    <property type="evidence" value="ECO:0007669"/>
    <property type="project" value="UniProtKB-SubCell"/>
</dbReference>
<dbReference type="GO" id="GO:0009318">
    <property type="term" value="C:exodeoxyribonuclease VII complex"/>
    <property type="evidence" value="ECO:0007669"/>
    <property type="project" value="InterPro"/>
</dbReference>
<dbReference type="GO" id="GO:0008855">
    <property type="term" value="F:exodeoxyribonuclease VII activity"/>
    <property type="evidence" value="ECO:0007669"/>
    <property type="project" value="UniProtKB-UniRule"/>
</dbReference>
<dbReference type="GO" id="GO:0003676">
    <property type="term" value="F:nucleic acid binding"/>
    <property type="evidence" value="ECO:0007669"/>
    <property type="project" value="InterPro"/>
</dbReference>
<dbReference type="GO" id="GO:0006308">
    <property type="term" value="P:DNA catabolic process"/>
    <property type="evidence" value="ECO:0007669"/>
    <property type="project" value="UniProtKB-UniRule"/>
</dbReference>
<dbReference type="CDD" id="cd04489">
    <property type="entry name" value="ExoVII_LU_OBF"/>
    <property type="match status" value="1"/>
</dbReference>
<dbReference type="HAMAP" id="MF_00378">
    <property type="entry name" value="Exonuc_7_L"/>
    <property type="match status" value="1"/>
</dbReference>
<dbReference type="InterPro" id="IPR003753">
    <property type="entry name" value="Exonuc_VII_L"/>
</dbReference>
<dbReference type="InterPro" id="IPR020579">
    <property type="entry name" value="Exonuc_VII_lsu_C"/>
</dbReference>
<dbReference type="InterPro" id="IPR025824">
    <property type="entry name" value="OB-fold_nuc-bd_dom"/>
</dbReference>
<dbReference type="NCBIfam" id="TIGR00237">
    <property type="entry name" value="xseA"/>
    <property type="match status" value="1"/>
</dbReference>
<dbReference type="PANTHER" id="PTHR30008">
    <property type="entry name" value="EXODEOXYRIBONUCLEASE 7 LARGE SUBUNIT"/>
    <property type="match status" value="1"/>
</dbReference>
<dbReference type="PANTHER" id="PTHR30008:SF0">
    <property type="entry name" value="EXODEOXYRIBONUCLEASE 7 LARGE SUBUNIT"/>
    <property type="match status" value="1"/>
</dbReference>
<dbReference type="Pfam" id="PF02601">
    <property type="entry name" value="Exonuc_VII_L"/>
    <property type="match status" value="1"/>
</dbReference>
<dbReference type="Pfam" id="PF13742">
    <property type="entry name" value="tRNA_anti_2"/>
    <property type="match status" value="1"/>
</dbReference>
<accession>Q74IM1</accession>
<gene>
    <name evidence="1" type="primary">xseA</name>
    <name type="ordered locus">LJ_1549</name>
</gene>
<evidence type="ECO:0000255" key="1">
    <source>
        <dbReference type="HAMAP-Rule" id="MF_00378"/>
    </source>
</evidence>
<proteinExistence type="inferred from homology"/>
<keyword id="KW-0963">Cytoplasm</keyword>
<keyword id="KW-0269">Exonuclease</keyword>
<keyword id="KW-0378">Hydrolase</keyword>
<keyword id="KW-0540">Nuclease</keyword>
<sequence length="456" mass="52270">MVDNKVYLSVSDLNFYISQKFKNDPYLHKVFLQGELSNFRFRMNSHQYFSLKDEKSKINVVMFRSFFEKLKFKPEEGMKVYVSGYVDVYGPQGSYQFYAQTMEPAGLGALYEQLRQLQEKLAKEGLFNEEHKKKIPLFPDRIAVVTSASGAVIHDIMVTANRRFPHAEIDLYPAKVQGDEAADTIVAALQQIQAQGDKYDVVIIGRGGGSLEDLWPFNEEKVVRQIYAMQMPVISSVGHETDTTLADLVADARAATPTAAAEYATPNLVDVLTQIVQLRARLYAAVQANIHTKHQILDRLKNAPVLQEPTRIYDQQIQQVDMLIHRLNQAMDNRLQHDGSTLRLLQERLKALSPSRKLEQLERERNFVVSNLFSTMNNYLKDQRNRLNRAMQQLDDISPLKTISRGYVYTTDQKGNIVTSVDQLKIDEKLKLHFKDGQVQVNVENIRREKNGNQEK</sequence>
<reference key="1">
    <citation type="journal article" date="2004" name="Proc. Natl. Acad. Sci. U.S.A.">
        <title>The genome sequence of the probiotic intestinal bacterium Lactobacillus johnsonii NCC 533.</title>
        <authorList>
            <person name="Pridmore R.D."/>
            <person name="Berger B."/>
            <person name="Desiere F."/>
            <person name="Vilanova D."/>
            <person name="Barretto C."/>
            <person name="Pittet A.-C."/>
            <person name="Zwahlen M.-C."/>
            <person name="Rouvet M."/>
            <person name="Altermann E."/>
            <person name="Barrangou R."/>
            <person name="Mollet B."/>
            <person name="Mercenier A."/>
            <person name="Klaenhammer T."/>
            <person name="Arigoni F."/>
            <person name="Schell M.A."/>
        </authorList>
    </citation>
    <scope>NUCLEOTIDE SEQUENCE [LARGE SCALE GENOMIC DNA]</scope>
    <source>
        <strain>CNCM I-1225 / La1 / NCC 533</strain>
    </source>
</reference>
<protein>
    <recommendedName>
        <fullName evidence="1">Exodeoxyribonuclease 7 large subunit</fullName>
        <ecNumber evidence="1">3.1.11.6</ecNumber>
    </recommendedName>
    <alternativeName>
        <fullName evidence="1">Exodeoxyribonuclease VII large subunit</fullName>
        <shortName evidence="1">Exonuclease VII large subunit</shortName>
    </alternativeName>
</protein>
<comment type="function">
    <text evidence="1">Bidirectionally degrades single-stranded DNA into large acid-insoluble oligonucleotides, which are then degraded further into small acid-soluble oligonucleotides.</text>
</comment>
<comment type="catalytic activity">
    <reaction evidence="1">
        <text>Exonucleolytic cleavage in either 5'- to 3'- or 3'- to 5'-direction to yield nucleoside 5'-phosphates.</text>
        <dbReference type="EC" id="3.1.11.6"/>
    </reaction>
</comment>
<comment type="subunit">
    <text evidence="1">Heterooligomer composed of large and small subunits.</text>
</comment>
<comment type="subcellular location">
    <subcellularLocation>
        <location evidence="1">Cytoplasm</location>
    </subcellularLocation>
</comment>
<comment type="similarity">
    <text evidence="1">Belongs to the XseA family.</text>
</comment>
<feature type="chain" id="PRO_0000273664" description="Exodeoxyribonuclease 7 large subunit">
    <location>
        <begin position="1"/>
        <end position="456"/>
    </location>
</feature>
<name>EX7L_LACJO</name>